<evidence type="ECO:0000255" key="1">
    <source>
        <dbReference type="HAMAP-Rule" id="MF_00563"/>
    </source>
</evidence>
<evidence type="ECO:0000269" key="2">
    <source>
    </source>
</evidence>
<evidence type="ECO:0000303" key="3">
    <source>
    </source>
</evidence>
<evidence type="ECO:0000305" key="4">
    <source>
    </source>
</evidence>
<name>SIHH_METJA</name>
<sequence>MYEVRDINLWKEGERKIQWAKQHMPVLNLIRERFKEEKPFKGITIGMALHLEAKTAVLAETLMEGGAEIAITGCNPLSTQDDVAAACAKKGMHVYAWRGETVEEYYENLNKVLDHKPDIVIDDGCDLIFLLHTKRTELLDNIMGGCEETTTGIIRLKAMEKEGALKFPVMDVNDAYTKHLFDNRYGTGQSALDGILRATNLLIAGKTVVVAGYGWCGRGVAMRAKGLGAEVVVTEVNPIRALEARMDGFRVMKMEKAAEIGDIFITTTGCKDVIRKEHILKMRNGAILANAGHFDNEINKKHLEELAKSIKEVRNCVTEYDLGNKKIYLLGEGRLVNLACADGHPCEVMDMSFANQALAAEYILKNHEKLEPRVYNIPYEQDLMIASLKLKAMGIEIDELTKEQKKYLEDWREGT</sequence>
<accession>Q58783</accession>
<feature type="chain" id="PRO_0000117004" description="S-inosyl-L-homocysteine hydrolase">
    <location>
        <begin position="1"/>
        <end position="415"/>
    </location>
</feature>
<feature type="binding site" evidence="1">
    <location>
        <position position="123"/>
    </location>
    <ligand>
        <name>substrate</name>
    </ligand>
</feature>
<feature type="binding site" evidence="1">
    <location>
        <position position="148"/>
    </location>
    <ligand>
        <name>substrate</name>
    </ligand>
</feature>
<feature type="binding site" evidence="1">
    <location>
        <begin position="149"/>
        <end position="151"/>
    </location>
    <ligand>
        <name>NAD(+)</name>
        <dbReference type="ChEBI" id="CHEBI:57540"/>
    </ligand>
</feature>
<feature type="binding site" evidence="1">
    <location>
        <position position="178"/>
    </location>
    <ligand>
        <name>substrate</name>
    </ligand>
</feature>
<feature type="binding site" evidence="1">
    <location>
        <position position="182"/>
    </location>
    <ligand>
        <name>substrate</name>
    </ligand>
</feature>
<feature type="binding site" evidence="1">
    <location>
        <position position="183"/>
    </location>
    <ligand>
        <name>NAD(+)</name>
        <dbReference type="ChEBI" id="CHEBI:57540"/>
    </ligand>
</feature>
<feature type="binding site" evidence="1">
    <location>
        <begin position="212"/>
        <end position="217"/>
    </location>
    <ligand>
        <name>NAD(+)</name>
        <dbReference type="ChEBI" id="CHEBI:57540"/>
    </ligand>
</feature>
<feature type="binding site" evidence="1">
    <location>
        <position position="235"/>
    </location>
    <ligand>
        <name>NAD(+)</name>
        <dbReference type="ChEBI" id="CHEBI:57540"/>
    </ligand>
</feature>
<feature type="binding site" evidence="1">
    <location>
        <begin position="291"/>
        <end position="293"/>
    </location>
    <ligand>
        <name>NAD(+)</name>
        <dbReference type="ChEBI" id="CHEBI:57540"/>
    </ligand>
</feature>
<feature type="binding site" evidence="1">
    <location>
        <position position="337"/>
    </location>
    <ligand>
        <name>NAD(+)</name>
        <dbReference type="ChEBI" id="CHEBI:57540"/>
    </ligand>
</feature>
<organism>
    <name type="scientific">Methanocaldococcus jannaschii (strain ATCC 43067 / DSM 2661 / JAL-1 / JCM 10045 / NBRC 100440)</name>
    <name type="common">Methanococcus jannaschii</name>
    <dbReference type="NCBI Taxonomy" id="243232"/>
    <lineage>
        <taxon>Archaea</taxon>
        <taxon>Methanobacteriati</taxon>
        <taxon>Methanobacteriota</taxon>
        <taxon>Methanomada group</taxon>
        <taxon>Methanococci</taxon>
        <taxon>Methanococcales</taxon>
        <taxon>Methanocaldococcaceae</taxon>
        <taxon>Methanocaldococcus</taxon>
    </lineage>
</organism>
<keyword id="KW-0963">Cytoplasm</keyword>
<keyword id="KW-0378">Hydrolase</keyword>
<keyword id="KW-0520">NAD</keyword>
<keyword id="KW-0554">One-carbon metabolism</keyword>
<keyword id="KW-1185">Reference proteome</keyword>
<reference key="1">
    <citation type="journal article" date="1996" name="Science">
        <title>Complete genome sequence of the methanogenic archaeon, Methanococcus jannaschii.</title>
        <authorList>
            <person name="Bult C.J."/>
            <person name="White O."/>
            <person name="Olsen G.J."/>
            <person name="Zhou L."/>
            <person name="Fleischmann R.D."/>
            <person name="Sutton G.G."/>
            <person name="Blake J.A."/>
            <person name="FitzGerald L.M."/>
            <person name="Clayton R.A."/>
            <person name="Gocayne J.D."/>
            <person name="Kerlavage A.R."/>
            <person name="Dougherty B.A."/>
            <person name="Tomb J.-F."/>
            <person name="Adams M.D."/>
            <person name="Reich C.I."/>
            <person name="Overbeek R."/>
            <person name="Kirkness E.F."/>
            <person name="Weinstock K.G."/>
            <person name="Merrick J.M."/>
            <person name="Glodek A."/>
            <person name="Scott J.L."/>
            <person name="Geoghagen N.S.M."/>
            <person name="Weidman J.F."/>
            <person name="Fuhrmann J.L."/>
            <person name="Nguyen D."/>
            <person name="Utterback T.R."/>
            <person name="Kelley J.M."/>
            <person name="Peterson J.D."/>
            <person name="Sadow P.W."/>
            <person name="Hanna M.C."/>
            <person name="Cotton M.D."/>
            <person name="Roberts K.M."/>
            <person name="Hurst M.A."/>
            <person name="Kaine B.P."/>
            <person name="Borodovsky M."/>
            <person name="Klenk H.-P."/>
            <person name="Fraser C.M."/>
            <person name="Smith H.O."/>
            <person name="Woese C.R."/>
            <person name="Venter J.C."/>
        </authorList>
    </citation>
    <scope>NUCLEOTIDE SEQUENCE [LARGE SCALE GENOMIC DNA]</scope>
    <source>
        <strain>ATCC 43067 / DSM 2661 / JAL-1 / JCM 10045 / NBRC 100440</strain>
    </source>
</reference>
<reference key="2">
    <citation type="journal article" date="2015" name="J. Bacteriol.">
        <title>S-Inosyl-L-Homocysteine Hydrolase, a Novel Enzyme Involved in S-Adenosyl-L-Methionine Recycling.</title>
        <authorList>
            <person name="Miller D."/>
            <person name="Xu H."/>
            <person name="White R.H."/>
        </authorList>
    </citation>
    <scope>FUNCTION</scope>
    <scope>CATALYTIC ACTIVITY</scope>
    <scope>SUBSTRATE SPECIFICITY</scope>
    <scope>BIOPHYSICOCHEMICAL PROPERTIES</scope>
    <scope>COFACTOR</scope>
    <scope>SUBUNIT</scope>
    <scope>PATHWAY</scope>
</reference>
<gene>
    <name type="ordered locus">MJ1388</name>
</gene>
<comment type="function">
    <text evidence="2">Catalyzes the hydrolysis of S-inosyl-L-homocysteine (SIH) to L-homocysteine (Hcy) and inosine. Likely functions in a S-adenosyl-L-methionine (SAM) recycling pathway from S-adenosyl-L-homocysteine (SAH) produced from SAM-dependent methylation reactions. Can also catalyze the reverse reaction in vitro, i.e. the synthesis of SIH from Hcy and inosine. Is specific for SIH and inosine as it is unable to either hydrolyze SAH or synthesize SAH from adenosine and Hcy.</text>
</comment>
<comment type="catalytic activity">
    <reaction evidence="1 2">
        <text>S-inosyl-L-homocysteine + H2O = L-homocysteine + inosine</text>
        <dbReference type="Rhea" id="RHEA:59828"/>
        <dbReference type="ChEBI" id="CHEBI:15377"/>
        <dbReference type="ChEBI" id="CHEBI:17596"/>
        <dbReference type="ChEBI" id="CHEBI:57985"/>
        <dbReference type="ChEBI" id="CHEBI:58199"/>
        <dbReference type="EC" id="3.13.1.9"/>
    </reaction>
    <physiologicalReaction direction="left-to-right" evidence="1 4">
        <dbReference type="Rhea" id="RHEA:59829"/>
    </physiologicalReaction>
</comment>
<comment type="cofactor">
    <cofactor evidence="2">
        <name>NAD(+)</name>
        <dbReference type="ChEBI" id="CHEBI:57540"/>
    </cofactor>
    <text evidence="2">Binds 1 NAD(+) per subunit.</text>
</comment>
<comment type="biophysicochemical properties">
    <kinetics>
        <KM evidence="2">0.64 mM for inosine (at pH 7.0 and 70 degrees Celsius)</KM>
        <KM evidence="2">0.0054 mM for L-homocysteine (at pH 7.0 and 70 degrees Celsius)</KM>
        <KM evidence="2">0.22 mM for S-inosyl-L-homocysteine (at pH 7.0 and 70 degrees Celsius)</KM>
        <text evidence="2">kcat is 0.83 sec(-1) for the synthesis of SIH from inosine and L-homocysteine. kcat is 0.42 sec(-1) for the hydrolysis of SIH (at pH 7.0 and 70 degrees Celsius).</text>
    </kinetics>
    <phDependence>
        <text evidence="2">Optimum pH is 7.0-7.5 and pH 9.6 for the reaction in the direction of SIH synthesis. Shows no activity at either pH 6.5 or pH 11.5 in the synthetic direction. The activity of SIHH in the hydrolysis direction shows essentially the same activity over the pH range 6.5-11.5.</text>
    </phDependence>
    <temperatureDependence>
        <text evidence="2">Optimum temperature is about 70 degrees Celsius.</text>
    </temperatureDependence>
</comment>
<comment type="pathway">
    <text evidence="4">Amino-acid biosynthesis; S-adenosyl-L-methionine biosynthesis.</text>
</comment>
<comment type="subunit">
    <text evidence="2">Exists both as a homotetramer and a homodimer, in a 4:1 ratio.</text>
</comment>
<comment type="subcellular location">
    <subcellularLocation>
        <location evidence="1">Cytoplasm</location>
    </subcellularLocation>
</comment>
<comment type="miscellaneous">
    <text evidence="4">SAH is a product of SAM methyltransferases and is known to be a feedback inhibitor of these enzymes. As a result of this inhibition, organisms have evolved efficient enzymes to metabolize SAH via different pathways. The pathway found in methanogens differs from the canonical pathway, it uses the deamination of S-adenosyl-L-homocysteine to form S-inosyl-L-homocysteine for the regeneration of SAM from S-adenosyl-L-homocysteine.</text>
</comment>
<comment type="similarity">
    <text evidence="1">Belongs to the adenosylhomocysteinase family.</text>
</comment>
<protein>
    <recommendedName>
        <fullName evidence="3">S-inosyl-L-homocysteine hydrolase</fullName>
        <shortName evidence="3">SIHH</shortName>
        <ecNumber evidence="1 2">3.13.1.9</ecNumber>
    </recommendedName>
</protein>
<proteinExistence type="evidence at protein level"/>
<dbReference type="EC" id="3.13.1.9" evidence="1 2"/>
<dbReference type="EMBL" id="L77117">
    <property type="protein sequence ID" value="AAB99397.1"/>
    <property type="molecule type" value="Genomic_DNA"/>
</dbReference>
<dbReference type="PIR" id="C64473">
    <property type="entry name" value="C64473"/>
</dbReference>
<dbReference type="RefSeq" id="WP_010870905.1">
    <property type="nucleotide sequence ID" value="NC_000909.1"/>
</dbReference>
<dbReference type="SMR" id="Q58783"/>
<dbReference type="FunCoup" id="Q58783">
    <property type="interactions" value="138"/>
</dbReference>
<dbReference type="STRING" id="243232.MJ_1388"/>
<dbReference type="PaxDb" id="243232-MJ_1388"/>
<dbReference type="EnsemblBacteria" id="AAB99397">
    <property type="protein sequence ID" value="AAB99397"/>
    <property type="gene ID" value="MJ_1388"/>
</dbReference>
<dbReference type="GeneID" id="1452291"/>
<dbReference type="KEGG" id="mja:MJ_1388"/>
<dbReference type="eggNOG" id="arCOG04137">
    <property type="taxonomic scope" value="Archaea"/>
</dbReference>
<dbReference type="HOGENOM" id="CLU_025194_2_1_2"/>
<dbReference type="InParanoid" id="Q58783"/>
<dbReference type="OrthoDB" id="8479at2157"/>
<dbReference type="PhylomeDB" id="Q58783"/>
<dbReference type="BRENDA" id="3.13.1.9">
    <property type="organism ID" value="3260"/>
</dbReference>
<dbReference type="BRENDA" id="3.3.1.B1">
    <property type="organism ID" value="3260"/>
</dbReference>
<dbReference type="UniPathway" id="UPA00315"/>
<dbReference type="Proteomes" id="UP000000805">
    <property type="component" value="Chromosome"/>
</dbReference>
<dbReference type="GO" id="GO:0005829">
    <property type="term" value="C:cytosol"/>
    <property type="evidence" value="ECO:0000318"/>
    <property type="project" value="GO_Central"/>
</dbReference>
<dbReference type="GO" id="GO:0004013">
    <property type="term" value="F:adenosylhomocysteinase activity"/>
    <property type="evidence" value="ECO:0000318"/>
    <property type="project" value="GO_Central"/>
</dbReference>
<dbReference type="GO" id="GO:0016802">
    <property type="term" value="F:trialkylsulfonium hydrolase activity"/>
    <property type="evidence" value="ECO:0007669"/>
    <property type="project" value="UniProtKB-UniRule"/>
</dbReference>
<dbReference type="GO" id="GO:0006730">
    <property type="term" value="P:one-carbon metabolic process"/>
    <property type="evidence" value="ECO:0007669"/>
    <property type="project" value="UniProtKB-KW"/>
</dbReference>
<dbReference type="GO" id="GO:0006556">
    <property type="term" value="P:S-adenosylmethionine biosynthetic process"/>
    <property type="evidence" value="ECO:0007669"/>
    <property type="project" value="UniProtKB-UniRule"/>
</dbReference>
<dbReference type="GO" id="GO:0033353">
    <property type="term" value="P:S-adenosylmethionine cycle"/>
    <property type="evidence" value="ECO:0000318"/>
    <property type="project" value="GO_Central"/>
</dbReference>
<dbReference type="CDD" id="cd00401">
    <property type="entry name" value="SAHH"/>
    <property type="match status" value="1"/>
</dbReference>
<dbReference type="FunFam" id="3.40.50.720:FF:000004">
    <property type="entry name" value="Adenosylhomocysteinase"/>
    <property type="match status" value="1"/>
</dbReference>
<dbReference type="Gene3D" id="3.40.50.1480">
    <property type="entry name" value="Adenosylhomocysteinase-like"/>
    <property type="match status" value="1"/>
</dbReference>
<dbReference type="Gene3D" id="3.40.50.720">
    <property type="entry name" value="NAD(P)-binding Rossmann-like Domain"/>
    <property type="match status" value="1"/>
</dbReference>
<dbReference type="HAMAP" id="MF_00563">
    <property type="entry name" value="AdoHcyase"/>
    <property type="match status" value="1"/>
</dbReference>
<dbReference type="InterPro" id="IPR042172">
    <property type="entry name" value="Adenosylhomocyst_ase-like_sf"/>
</dbReference>
<dbReference type="InterPro" id="IPR000043">
    <property type="entry name" value="Adenosylhomocysteinase-like"/>
</dbReference>
<dbReference type="InterPro" id="IPR015878">
    <property type="entry name" value="Ado_hCys_hydrolase_NAD-bd"/>
</dbReference>
<dbReference type="InterPro" id="IPR036291">
    <property type="entry name" value="NAD(P)-bd_dom_sf"/>
</dbReference>
<dbReference type="InterPro" id="IPR020082">
    <property type="entry name" value="S-Ado-L-homoCys_hydrolase_CS"/>
</dbReference>
<dbReference type="NCBIfam" id="TIGR00936">
    <property type="entry name" value="ahcY"/>
    <property type="match status" value="1"/>
</dbReference>
<dbReference type="NCBIfam" id="NF004005">
    <property type="entry name" value="PRK05476.2-3"/>
    <property type="match status" value="1"/>
</dbReference>
<dbReference type="PANTHER" id="PTHR23420">
    <property type="entry name" value="ADENOSYLHOMOCYSTEINASE"/>
    <property type="match status" value="1"/>
</dbReference>
<dbReference type="PANTHER" id="PTHR23420:SF0">
    <property type="entry name" value="ADENOSYLHOMOCYSTEINASE"/>
    <property type="match status" value="1"/>
</dbReference>
<dbReference type="Pfam" id="PF05221">
    <property type="entry name" value="AdoHcyase"/>
    <property type="match status" value="2"/>
</dbReference>
<dbReference type="Pfam" id="PF00670">
    <property type="entry name" value="AdoHcyase_NAD"/>
    <property type="match status" value="1"/>
</dbReference>
<dbReference type="PIRSF" id="PIRSF001109">
    <property type="entry name" value="Ad_hcy_hydrolase"/>
    <property type="match status" value="1"/>
</dbReference>
<dbReference type="SMART" id="SM00996">
    <property type="entry name" value="AdoHcyase"/>
    <property type="match status" value="1"/>
</dbReference>
<dbReference type="SMART" id="SM00997">
    <property type="entry name" value="AdoHcyase_NAD"/>
    <property type="match status" value="1"/>
</dbReference>
<dbReference type="SUPFAM" id="SSF52283">
    <property type="entry name" value="Formate/glycerate dehydrogenase catalytic domain-like"/>
    <property type="match status" value="1"/>
</dbReference>
<dbReference type="SUPFAM" id="SSF51735">
    <property type="entry name" value="NAD(P)-binding Rossmann-fold domains"/>
    <property type="match status" value="1"/>
</dbReference>
<dbReference type="PROSITE" id="PS00738">
    <property type="entry name" value="ADOHCYASE_1"/>
    <property type="match status" value="1"/>
</dbReference>
<dbReference type="PROSITE" id="PS00739">
    <property type="entry name" value="ADOHCYASE_2"/>
    <property type="match status" value="1"/>
</dbReference>